<protein>
    <recommendedName>
        <fullName evidence="1">Dolichyl pyrophosphate Glc1Man9GlcNAc2 alpha-1,3-glucosyltransferase</fullName>
        <ecNumber evidence="1">2.4.1.265</ecNumber>
    </recommendedName>
    <alternativeName>
        <fullName>Asparagine-linked glycosylation protein 8 homolog</fullName>
    </alternativeName>
    <alternativeName>
        <fullName>Dol-P-Glc:Glc(1)Man(9)GlcNAc(2)-PP-dolichyl alpha-1,3-glucosyltransferase</fullName>
    </alternativeName>
    <alternativeName>
        <fullName>Dolichyl-P-Glc:Glc1Man9GlcNAc2-PP-dolichyl glucosyltransferase</fullName>
    </alternativeName>
</protein>
<keyword id="KW-0025">Alternative splicing</keyword>
<keyword id="KW-0256">Endoplasmic reticulum</keyword>
<keyword id="KW-0328">Glycosyltransferase</keyword>
<keyword id="KW-0472">Membrane</keyword>
<keyword id="KW-1185">Reference proteome</keyword>
<keyword id="KW-0808">Transferase</keyword>
<keyword id="KW-0812">Transmembrane</keyword>
<keyword id="KW-1133">Transmembrane helix</keyword>
<comment type="function">
    <text evidence="1">Dolichyl pyrophosphate Glc1Man9GlcNAc2 alpha-1,3-glucosyltransferase that operates in the biosynthetic pathway of dolichol-linked oligosaccharides, the glycan precursors employed in protein asparagine (N)-glycosylation. The assembly of dolichol-linked oligosaccharides begins on the cytosolic side of the endoplasmic reticulum membrane and finishes in its lumen. The sequential addition of sugars to dolichol pyrophosphate produces dolichol-linked oligosaccharides containing fourteen sugars, including two GlcNAcs, nine mannoses and three glucoses. Once assembled, the oligosaccharide is transferred from the lipid to nascent proteins by oligosaccharyltransferases. In the lumen of the endoplasmic reticulum, adds the second glucose residue from dolichyl phosphate glucose (Dol-P-Glc) onto the lipid-linked oligosaccharide intermediate Glc(1)Man(9)GlcNAc(2)-PP-Dol to produce Glc(2)Man(9)GlcNAc(2)-PP-Dol.</text>
</comment>
<comment type="catalytic activity">
    <reaction evidence="1">
        <text>an alpha-D-Glc-(1-&gt;3)-alpha-D-Man-(1-&gt;2)-alpha-D-Man-(1-&gt;2)-alpha-D-Man-(1-&gt;3)-[alpha-D-Man-(1-&gt;2)-alpha-D-Man-(1-&gt;3)-[alpha-D-Man-(1-&gt;2)-alpha-D-Man-(1-&gt;6)]-alpha-D-Man-(1-&gt;6)]-beta-D-Man-(1-&gt;4)-beta-D-GlcNAc-(1-&gt;4)-alpha-D-GlcNAc-diphospho-di-trans,poly-cis-dolichol + a di-trans,poly-cis-dolichyl beta-D-glucosyl phosphate = an alpha-D-Glc-(1-&gt;3)-alpha-D-Glc-(1-&gt;3)-alpha-D-Man-(1-&gt;2)-alpha-D-Man-(1-&gt;2)-alpha-D-Man-(1-&gt;3)-[alpha-D-Man-(1-&gt;2)-alpha-D-Man-(1-&gt;3)-[alpha-D-Man-(1-&gt;2)-alpha-D-Man-(1-&gt;6)]-alpha-D-Man-(1-&gt;6)]-beta-D-Man-(1-&gt;4)-beta-D-GlcNAc-(1-&gt;4)-alpha-D-GlcNAc-diphospho-di-trans,poly-cis-dolichol + a di-trans,poly-cis-dolichyl phosphate + H(+)</text>
        <dbReference type="Rhea" id="RHEA:31307"/>
        <dbReference type="Rhea" id="RHEA-COMP:19498"/>
        <dbReference type="Rhea" id="RHEA-COMP:19502"/>
        <dbReference type="Rhea" id="RHEA-COMP:19521"/>
        <dbReference type="Rhea" id="RHEA-COMP:19522"/>
        <dbReference type="ChEBI" id="CHEBI:15378"/>
        <dbReference type="ChEBI" id="CHEBI:57525"/>
        <dbReference type="ChEBI" id="CHEBI:57683"/>
        <dbReference type="ChEBI" id="CHEBI:132521"/>
        <dbReference type="ChEBI" id="CHEBI:132522"/>
        <dbReference type="EC" id="2.4.1.265"/>
    </reaction>
    <physiologicalReaction direction="left-to-right" evidence="1">
        <dbReference type="Rhea" id="RHEA:31308"/>
    </physiologicalReaction>
</comment>
<comment type="pathway">
    <text evidence="1">Protein modification; protein glycosylation.</text>
</comment>
<comment type="subcellular location">
    <subcellularLocation>
        <location evidence="1">Endoplasmic reticulum membrane</location>
        <topology evidence="2">Multi-pass membrane protein</topology>
    </subcellularLocation>
</comment>
<comment type="alternative products">
    <event type="alternative splicing"/>
    <isoform>
        <id>P52887-1</id>
        <name evidence="4">a</name>
        <sequence type="displayed"/>
    </isoform>
    <isoform>
        <id>P52887-2</id>
        <name evidence="4">b</name>
        <sequence type="described" ref="VSP_012307 VSP_012308"/>
    </isoform>
</comment>
<comment type="similarity">
    <text evidence="3">Belongs to the ALG6/ALG8 glucosyltransferase family.</text>
</comment>
<gene>
    <name evidence="4" type="primary">algn-8</name>
    <name evidence="4" type="ORF">C08H9.3</name>
</gene>
<proteinExistence type="inferred from homology"/>
<sequence length="766" mass="86870">MGEVQLVLAVTAILISFKCLLIPAYVSTDFEVHRNWMAVTWQRPLCEWYTEATSEWTLDYPPFFAYFELGLASVAHFFGFDECLVISKTPRFSRRILIFQRFSVIFCDILYIAVCALYSFRSPRLVSRIPKKLQQNGREACFVLLASLQALIICDSIHFQYNSMLTAIFLMSLFFIDTERYLMAALSYSILLNFKHIYVYYALGYVFYYLVNYFQFSGNVLLANTPKAISLAIALLIPFCASIFPFIHASGVQGLQNIATRLFPVSRGLTHAYWAPNFWALYNFADLCLYRVLSLLKIGKFDAPTYTSGLVQEYSHSVLPNVSPMGTLCLVVISSMIVLTGLVIRRKDSADFSLFAVFSAFCFFYFGYHVHEKAIILVTVPMTVFAIKNPKYHSILIHLTCIASFSLFPLLFTPFETLLKYAICVSYFFIQLVFLKRVTLMPLSDLIPTRHVASWLLMGMVEVYNTFLHKWLWTSRLPFAPLMAISILTAIELTGLIGALIWSTFGDGIFEIWWAKATCQIRERLIRDSTYSVQAVEDLDDVKLVAGIDTSAAKLNSDMVYISVSFWTYPDLKHVATISDTRMLELPYIPQYLAVREAEVMADFLKSVITERPELRPDVILCDGFGEFHSRGCGMACHVGALSGIASIGVAKNLTLHHTYETIGMENKSKVDSFVEHCREVYKNNKTSPGFIPFDIVEPVVLNILRMGSSMNGVFVSAGYGIDLELSTEICSQLLLNNTTIEPIRAADLESRRLVRENFDGNEKLE</sequence>
<organism>
    <name type="scientific">Caenorhabditis elegans</name>
    <dbReference type="NCBI Taxonomy" id="6239"/>
    <lineage>
        <taxon>Eukaryota</taxon>
        <taxon>Metazoa</taxon>
        <taxon>Ecdysozoa</taxon>
        <taxon>Nematoda</taxon>
        <taxon>Chromadorea</taxon>
        <taxon>Rhabditida</taxon>
        <taxon>Rhabditina</taxon>
        <taxon>Rhabditomorpha</taxon>
        <taxon>Rhabditoidea</taxon>
        <taxon>Rhabditidae</taxon>
        <taxon>Peloderinae</taxon>
        <taxon>Caenorhabditis</taxon>
    </lineage>
</organism>
<dbReference type="EC" id="2.4.1.265" evidence="1"/>
<dbReference type="EMBL" id="BX284602">
    <property type="protein sequence ID" value="CAA91145.3"/>
    <property type="molecule type" value="Genomic_DNA"/>
</dbReference>
<dbReference type="EMBL" id="BX284602">
    <property type="protein sequence ID" value="CAH60747.1"/>
    <property type="molecule type" value="Genomic_DNA"/>
</dbReference>
<dbReference type="PIR" id="T19107">
    <property type="entry name" value="T19107"/>
</dbReference>
<dbReference type="RefSeq" id="NP_001021940.2">
    <molecule id="P52887-1"/>
    <property type="nucleotide sequence ID" value="NM_001026769.6"/>
</dbReference>
<dbReference type="RefSeq" id="NP_001021941.1">
    <property type="nucleotide sequence ID" value="NM_001026770.3"/>
</dbReference>
<dbReference type="RefSeq" id="NP_001379427.1">
    <molecule id="P52887-2"/>
    <property type="nucleotide sequence ID" value="NM_001393171.1"/>
</dbReference>
<dbReference type="SMR" id="P52887"/>
<dbReference type="BioGRID" id="39864">
    <property type="interactions" value="2"/>
</dbReference>
<dbReference type="FunCoup" id="P52887">
    <property type="interactions" value="2642"/>
</dbReference>
<dbReference type="STRING" id="6239.C08H9.3a.1"/>
<dbReference type="CAZy" id="GT57">
    <property type="family name" value="Glycosyltransferase Family 57"/>
</dbReference>
<dbReference type="PaxDb" id="6239-C08H9.3a"/>
<dbReference type="PeptideAtlas" id="P52887"/>
<dbReference type="EnsemblMetazoa" id="C08H9.3a.1">
    <molecule id="P52887-1"/>
    <property type="protein sequence ID" value="C08H9.3a.1"/>
    <property type="gene ID" value="WBGene00007464"/>
</dbReference>
<dbReference type="EnsemblMetazoa" id="C08H9.3b.1">
    <molecule id="P52887-2"/>
    <property type="protein sequence ID" value="C08H9.3b.1"/>
    <property type="gene ID" value="WBGene00007464"/>
</dbReference>
<dbReference type="GeneID" id="174542"/>
<dbReference type="KEGG" id="cel:CELE_C08H9.3"/>
<dbReference type="UCSC" id="C08H9.3a">
    <molecule id="P52887-1"/>
    <property type="organism name" value="c. elegans"/>
</dbReference>
<dbReference type="AGR" id="WB:WBGene00007464"/>
<dbReference type="CTD" id="174542"/>
<dbReference type="WormBase" id="C08H9.3a">
    <molecule id="P52887-1"/>
    <property type="protein sequence ID" value="CE47030"/>
    <property type="gene ID" value="WBGene00007464"/>
    <property type="gene designation" value="algn-8"/>
</dbReference>
<dbReference type="WormBase" id="C08H9.3b">
    <molecule id="P52887-2"/>
    <property type="protein sequence ID" value="CE37608"/>
    <property type="gene ID" value="WBGene00007464"/>
    <property type="gene designation" value="algn-8"/>
</dbReference>
<dbReference type="eggNOG" id="KOG2576">
    <property type="taxonomic scope" value="Eukaryota"/>
</dbReference>
<dbReference type="eggNOG" id="KOG4417">
    <property type="taxonomic scope" value="Eukaryota"/>
</dbReference>
<dbReference type="GeneTree" id="ENSGT00940000153733"/>
<dbReference type="HOGENOM" id="CLU_398629_0_0_1"/>
<dbReference type="InParanoid" id="P52887"/>
<dbReference type="OMA" id="CALYSFR"/>
<dbReference type="OrthoDB" id="1689333at2759"/>
<dbReference type="PhylomeDB" id="P52887"/>
<dbReference type="Reactome" id="R-CEL-446193">
    <property type="pathway name" value="Biosynthesis of the N-glycan precursor (dolichol lipid-linked oligosaccharide, LLO) and transfer to a nascent protein"/>
</dbReference>
<dbReference type="UniPathway" id="UPA00378"/>
<dbReference type="PRO" id="PR:P52887"/>
<dbReference type="Proteomes" id="UP000001940">
    <property type="component" value="Chromosome II"/>
</dbReference>
<dbReference type="Bgee" id="WBGene00007464">
    <property type="expression patterns" value="Expressed in germ line (C elegans) and 4 other cell types or tissues"/>
</dbReference>
<dbReference type="GO" id="GO:0005789">
    <property type="term" value="C:endoplasmic reticulum membrane"/>
    <property type="evidence" value="ECO:0000250"/>
    <property type="project" value="UniProtKB"/>
</dbReference>
<dbReference type="GO" id="GO:0042283">
    <property type="term" value="F:dolichyl pyrophosphate Glc1Man9GlcNAc2 alpha-1,3-glucosyltransferase activity"/>
    <property type="evidence" value="ECO:0000250"/>
    <property type="project" value="UniProtKB"/>
</dbReference>
<dbReference type="GO" id="GO:0004519">
    <property type="term" value="F:endonuclease activity"/>
    <property type="evidence" value="ECO:0007669"/>
    <property type="project" value="InterPro"/>
</dbReference>
<dbReference type="GO" id="GO:0006281">
    <property type="term" value="P:DNA repair"/>
    <property type="evidence" value="ECO:0007669"/>
    <property type="project" value="InterPro"/>
</dbReference>
<dbReference type="GO" id="GO:0006488">
    <property type="term" value="P:dolichol-linked oligosaccharide biosynthetic process"/>
    <property type="evidence" value="ECO:0000250"/>
    <property type="project" value="UniProtKB"/>
</dbReference>
<dbReference type="GO" id="GO:0006487">
    <property type="term" value="P:protein N-linked glycosylation"/>
    <property type="evidence" value="ECO:0000250"/>
    <property type="project" value="UniProtKB"/>
</dbReference>
<dbReference type="CDD" id="cd06559">
    <property type="entry name" value="Endonuclease_V"/>
    <property type="match status" value="1"/>
</dbReference>
<dbReference type="Gene3D" id="3.30.2170.10">
    <property type="entry name" value="archaeoglobus fulgidus dsm 4304 superfamily"/>
    <property type="match status" value="1"/>
</dbReference>
<dbReference type="InterPro" id="IPR021173">
    <property type="entry name" value="Algn-8"/>
</dbReference>
<dbReference type="InterPro" id="IPR007581">
    <property type="entry name" value="Endonuclease-V"/>
</dbReference>
<dbReference type="InterPro" id="IPR004856">
    <property type="entry name" value="Glyco_trans_ALG6/ALG8"/>
</dbReference>
<dbReference type="PANTHER" id="PTHR12413">
    <property type="entry name" value="DOLICHYL GLYCOSYLTRANSFERASE"/>
    <property type="match status" value="1"/>
</dbReference>
<dbReference type="PANTHER" id="PTHR12413:SF2">
    <property type="entry name" value="DOLICHYL PYROPHOSPHATE GLC1MAN9GLCNAC2 ALPHA-1,3-GLUCOSYLTRANSFERASE-RELATED"/>
    <property type="match status" value="1"/>
</dbReference>
<dbReference type="Pfam" id="PF03155">
    <property type="entry name" value="Alg6_Alg8"/>
    <property type="match status" value="1"/>
</dbReference>
<dbReference type="Pfam" id="PF04493">
    <property type="entry name" value="Endonuclease_5"/>
    <property type="match status" value="1"/>
</dbReference>
<dbReference type="PIRSF" id="PIRSF037345">
    <property type="entry name" value="Dolichyl-P-Glc/endonucV"/>
    <property type="match status" value="1"/>
</dbReference>
<name>ALG8_CAEEL</name>
<evidence type="ECO:0000250" key="1">
    <source>
        <dbReference type="UniProtKB" id="P40351"/>
    </source>
</evidence>
<evidence type="ECO:0000255" key="2"/>
<evidence type="ECO:0000305" key="3"/>
<evidence type="ECO:0000312" key="4">
    <source>
        <dbReference type="WormBase" id="C08H9.3a"/>
    </source>
</evidence>
<feature type="chain" id="PRO_0000174164" description="Dolichyl pyrophosphate Glc1Man9GlcNAc2 alpha-1,3-glucosyltransferase">
    <location>
        <begin position="1"/>
        <end position="766"/>
    </location>
</feature>
<feature type="transmembrane region" description="Helical" evidence="2">
    <location>
        <begin position="6"/>
        <end position="26"/>
    </location>
</feature>
<feature type="transmembrane region" description="Helical" evidence="2">
    <location>
        <begin position="60"/>
        <end position="80"/>
    </location>
</feature>
<feature type="transmembrane region" description="Helical" evidence="2">
    <location>
        <begin position="96"/>
        <end position="116"/>
    </location>
</feature>
<feature type="transmembrane region" description="Helical" evidence="2">
    <location>
        <begin position="156"/>
        <end position="176"/>
    </location>
</feature>
<feature type="transmembrane region" description="Helical" evidence="2">
    <location>
        <begin position="190"/>
        <end position="210"/>
    </location>
</feature>
<feature type="transmembrane region" description="Helical" evidence="2">
    <location>
        <begin position="228"/>
        <end position="248"/>
    </location>
</feature>
<feature type="transmembrane region" description="Helical" evidence="2">
    <location>
        <begin position="324"/>
        <end position="344"/>
    </location>
</feature>
<feature type="transmembrane region" description="Helical" evidence="2">
    <location>
        <begin position="350"/>
        <end position="370"/>
    </location>
</feature>
<feature type="transmembrane region" description="Helical" evidence="2">
    <location>
        <begin position="395"/>
        <end position="415"/>
    </location>
</feature>
<feature type="transmembrane region" description="Helical" evidence="2">
    <location>
        <begin position="423"/>
        <end position="443"/>
    </location>
</feature>
<feature type="transmembrane region" description="Helical" evidence="2">
    <location>
        <begin position="452"/>
        <end position="472"/>
    </location>
</feature>
<feature type="transmembrane region" description="Helical" evidence="2">
    <location>
        <begin position="482"/>
        <end position="502"/>
    </location>
</feature>
<feature type="splice variant" id="VSP_012307" description="In isoform b." evidence="3">
    <original>YIAVCALYSFRSP</original>
    <variation>LLSALYTPSALHV</variation>
    <location>
        <begin position="111"/>
        <end position="123"/>
    </location>
</feature>
<feature type="splice variant" id="VSP_012308" description="In isoform b." evidence="3">
    <location>
        <begin position="124"/>
        <end position="766"/>
    </location>
</feature>
<reference key="1">
    <citation type="journal article" date="1998" name="Science">
        <title>Genome sequence of the nematode C. elegans: a platform for investigating biology.</title>
        <authorList>
            <consortium name="The C. elegans sequencing consortium"/>
        </authorList>
    </citation>
    <scope>NUCLEOTIDE SEQUENCE [LARGE SCALE GENOMIC DNA]</scope>
    <source>
        <strain>Bristol N2</strain>
    </source>
</reference>
<accession>P52887</accession>
<accession>Q5WRQ2</accession>